<accession>Q1CEK9</accession>
<accession>C4GXV1</accession>
<dbReference type="EC" id="5.4.2.10" evidence="1"/>
<dbReference type="EMBL" id="CP000305">
    <property type="protein sequence ID" value="ABG19571.1"/>
    <property type="molecule type" value="Genomic_DNA"/>
</dbReference>
<dbReference type="EMBL" id="ACNQ01000017">
    <property type="protein sequence ID" value="EEO75751.1"/>
    <property type="molecule type" value="Genomic_DNA"/>
</dbReference>
<dbReference type="RefSeq" id="WP_002210189.1">
    <property type="nucleotide sequence ID" value="NZ_ACNQ01000017.1"/>
</dbReference>
<dbReference type="SMR" id="Q1CEK9"/>
<dbReference type="GeneID" id="57975214"/>
<dbReference type="KEGG" id="ypn:YPN_3244"/>
<dbReference type="HOGENOM" id="CLU_016950_7_0_6"/>
<dbReference type="Proteomes" id="UP000008936">
    <property type="component" value="Chromosome"/>
</dbReference>
<dbReference type="GO" id="GO:0005829">
    <property type="term" value="C:cytosol"/>
    <property type="evidence" value="ECO:0007669"/>
    <property type="project" value="TreeGrafter"/>
</dbReference>
<dbReference type="GO" id="GO:0000287">
    <property type="term" value="F:magnesium ion binding"/>
    <property type="evidence" value="ECO:0007669"/>
    <property type="project" value="UniProtKB-UniRule"/>
</dbReference>
<dbReference type="GO" id="GO:0008966">
    <property type="term" value="F:phosphoglucosamine mutase activity"/>
    <property type="evidence" value="ECO:0007669"/>
    <property type="project" value="UniProtKB-UniRule"/>
</dbReference>
<dbReference type="GO" id="GO:0004615">
    <property type="term" value="F:phosphomannomutase activity"/>
    <property type="evidence" value="ECO:0007669"/>
    <property type="project" value="TreeGrafter"/>
</dbReference>
<dbReference type="GO" id="GO:0005975">
    <property type="term" value="P:carbohydrate metabolic process"/>
    <property type="evidence" value="ECO:0007669"/>
    <property type="project" value="InterPro"/>
</dbReference>
<dbReference type="GO" id="GO:0009252">
    <property type="term" value="P:peptidoglycan biosynthetic process"/>
    <property type="evidence" value="ECO:0007669"/>
    <property type="project" value="TreeGrafter"/>
</dbReference>
<dbReference type="GO" id="GO:0006048">
    <property type="term" value="P:UDP-N-acetylglucosamine biosynthetic process"/>
    <property type="evidence" value="ECO:0007669"/>
    <property type="project" value="TreeGrafter"/>
</dbReference>
<dbReference type="CDD" id="cd05802">
    <property type="entry name" value="GlmM"/>
    <property type="match status" value="1"/>
</dbReference>
<dbReference type="FunFam" id="3.30.310.50:FF:000001">
    <property type="entry name" value="Phosphoglucosamine mutase"/>
    <property type="match status" value="1"/>
</dbReference>
<dbReference type="FunFam" id="3.40.120.10:FF:000001">
    <property type="entry name" value="Phosphoglucosamine mutase"/>
    <property type="match status" value="1"/>
</dbReference>
<dbReference type="FunFam" id="3.40.120.10:FF:000002">
    <property type="entry name" value="Phosphoglucosamine mutase"/>
    <property type="match status" value="1"/>
</dbReference>
<dbReference type="Gene3D" id="3.40.120.10">
    <property type="entry name" value="Alpha-D-Glucose-1,6-Bisphosphate, subunit A, domain 3"/>
    <property type="match status" value="3"/>
</dbReference>
<dbReference type="Gene3D" id="3.30.310.50">
    <property type="entry name" value="Alpha-D-phosphohexomutase, C-terminal domain"/>
    <property type="match status" value="1"/>
</dbReference>
<dbReference type="HAMAP" id="MF_01554_B">
    <property type="entry name" value="GlmM_B"/>
    <property type="match status" value="1"/>
</dbReference>
<dbReference type="InterPro" id="IPR005844">
    <property type="entry name" value="A-D-PHexomutase_a/b/a-I"/>
</dbReference>
<dbReference type="InterPro" id="IPR016055">
    <property type="entry name" value="A-D-PHexomutase_a/b/a-I/II/III"/>
</dbReference>
<dbReference type="InterPro" id="IPR005845">
    <property type="entry name" value="A-D-PHexomutase_a/b/a-II"/>
</dbReference>
<dbReference type="InterPro" id="IPR005846">
    <property type="entry name" value="A-D-PHexomutase_a/b/a-III"/>
</dbReference>
<dbReference type="InterPro" id="IPR005843">
    <property type="entry name" value="A-D-PHexomutase_C"/>
</dbReference>
<dbReference type="InterPro" id="IPR036900">
    <property type="entry name" value="A-D-PHexomutase_C_sf"/>
</dbReference>
<dbReference type="InterPro" id="IPR016066">
    <property type="entry name" value="A-D-PHexomutase_CS"/>
</dbReference>
<dbReference type="InterPro" id="IPR005841">
    <property type="entry name" value="Alpha-D-phosphohexomutase_SF"/>
</dbReference>
<dbReference type="InterPro" id="IPR006352">
    <property type="entry name" value="GlmM_bact"/>
</dbReference>
<dbReference type="InterPro" id="IPR050060">
    <property type="entry name" value="Phosphoglucosamine_mutase"/>
</dbReference>
<dbReference type="NCBIfam" id="TIGR01455">
    <property type="entry name" value="glmM"/>
    <property type="match status" value="1"/>
</dbReference>
<dbReference type="NCBIfam" id="NF008139">
    <property type="entry name" value="PRK10887.1"/>
    <property type="match status" value="1"/>
</dbReference>
<dbReference type="PANTHER" id="PTHR42946:SF1">
    <property type="entry name" value="PHOSPHOGLUCOMUTASE (ALPHA-D-GLUCOSE-1,6-BISPHOSPHATE-DEPENDENT)"/>
    <property type="match status" value="1"/>
</dbReference>
<dbReference type="PANTHER" id="PTHR42946">
    <property type="entry name" value="PHOSPHOHEXOSE MUTASE"/>
    <property type="match status" value="1"/>
</dbReference>
<dbReference type="Pfam" id="PF02878">
    <property type="entry name" value="PGM_PMM_I"/>
    <property type="match status" value="1"/>
</dbReference>
<dbReference type="Pfam" id="PF02879">
    <property type="entry name" value="PGM_PMM_II"/>
    <property type="match status" value="1"/>
</dbReference>
<dbReference type="Pfam" id="PF02880">
    <property type="entry name" value="PGM_PMM_III"/>
    <property type="match status" value="1"/>
</dbReference>
<dbReference type="Pfam" id="PF00408">
    <property type="entry name" value="PGM_PMM_IV"/>
    <property type="match status" value="1"/>
</dbReference>
<dbReference type="PRINTS" id="PR00509">
    <property type="entry name" value="PGMPMM"/>
</dbReference>
<dbReference type="SUPFAM" id="SSF55957">
    <property type="entry name" value="Phosphoglucomutase, C-terminal domain"/>
    <property type="match status" value="1"/>
</dbReference>
<dbReference type="SUPFAM" id="SSF53738">
    <property type="entry name" value="Phosphoglucomutase, first 3 domains"/>
    <property type="match status" value="3"/>
</dbReference>
<dbReference type="PROSITE" id="PS00710">
    <property type="entry name" value="PGM_PMM"/>
    <property type="match status" value="1"/>
</dbReference>
<keyword id="KW-0413">Isomerase</keyword>
<keyword id="KW-0460">Magnesium</keyword>
<keyword id="KW-0479">Metal-binding</keyword>
<keyword id="KW-0597">Phosphoprotein</keyword>
<name>GLMM_YERPN</name>
<proteinExistence type="inferred from homology"/>
<gene>
    <name evidence="1" type="primary">glmM</name>
    <name type="ordered locus">YPN_3244</name>
    <name type="ORF">YP516_3686</name>
</gene>
<protein>
    <recommendedName>
        <fullName evidence="1">Phosphoglucosamine mutase</fullName>
        <ecNumber evidence="1">5.4.2.10</ecNumber>
    </recommendedName>
</protein>
<feature type="chain" id="PRO_0000301405" description="Phosphoglucosamine mutase">
    <location>
        <begin position="1"/>
        <end position="446"/>
    </location>
</feature>
<feature type="active site" description="Phosphoserine intermediate" evidence="1">
    <location>
        <position position="102"/>
    </location>
</feature>
<feature type="binding site" description="via phosphate group" evidence="1">
    <location>
        <position position="102"/>
    </location>
    <ligand>
        <name>Mg(2+)</name>
        <dbReference type="ChEBI" id="CHEBI:18420"/>
    </ligand>
</feature>
<feature type="binding site" evidence="1">
    <location>
        <position position="241"/>
    </location>
    <ligand>
        <name>Mg(2+)</name>
        <dbReference type="ChEBI" id="CHEBI:18420"/>
    </ligand>
</feature>
<feature type="binding site" evidence="1">
    <location>
        <position position="243"/>
    </location>
    <ligand>
        <name>Mg(2+)</name>
        <dbReference type="ChEBI" id="CHEBI:18420"/>
    </ligand>
</feature>
<feature type="binding site" evidence="1">
    <location>
        <position position="245"/>
    </location>
    <ligand>
        <name>Mg(2+)</name>
        <dbReference type="ChEBI" id="CHEBI:18420"/>
    </ligand>
</feature>
<feature type="modified residue" description="Phosphoserine" evidence="1">
    <location>
        <position position="102"/>
    </location>
</feature>
<evidence type="ECO:0000255" key="1">
    <source>
        <dbReference type="HAMAP-Rule" id="MF_01554"/>
    </source>
</evidence>
<sequence>MSNRKYFGTDGIRGKVGESPITPDFVLKLGWAAGKVLARHGSRKIIIGKDTRISGYMLESALEAGLAAAGLSALFTGPMPTPAVAYLTRTFRAEAGIVISASHNPFYDNGIKFFSIDGTKLPDDVEEAIEAEMEKPLTCVESAELGKANRIVDAAGRYIEFCKGTFPSELSLNELKIVVDCANGATYHIAPSVLRELGATVITIGCEPDGMNINEECGATDVRLLQERVLAEGAHVGLAFDGDGDRLMMVDHLGNKVDGDQILYIIAREGLRQGQLKGGAVGTLMSNMGLQLALKDLGIPFVRAKVGDRYVLEAMQEKGWRIGAENSGHVILLDKTTTGDGIVAGLQVLTAMVRNHMSLHDLCSGMKLLPQILVNVRFSGEHNPLKSDEVEEVTRQVEKELGGRGRVLLRKSGTEPLIRVMVEGDAEESLIAEMANRIADAVKAAG</sequence>
<comment type="function">
    <text evidence="1">Catalyzes the conversion of glucosamine-6-phosphate to glucosamine-1-phosphate.</text>
</comment>
<comment type="catalytic activity">
    <reaction evidence="1">
        <text>alpha-D-glucosamine 1-phosphate = D-glucosamine 6-phosphate</text>
        <dbReference type="Rhea" id="RHEA:23424"/>
        <dbReference type="ChEBI" id="CHEBI:58516"/>
        <dbReference type="ChEBI" id="CHEBI:58725"/>
        <dbReference type="EC" id="5.4.2.10"/>
    </reaction>
</comment>
<comment type="cofactor">
    <cofactor evidence="1">
        <name>Mg(2+)</name>
        <dbReference type="ChEBI" id="CHEBI:18420"/>
    </cofactor>
    <text evidence="1">Binds 1 Mg(2+) ion per subunit.</text>
</comment>
<comment type="PTM">
    <text evidence="1">Activated by phosphorylation.</text>
</comment>
<comment type="similarity">
    <text evidence="1">Belongs to the phosphohexose mutase family.</text>
</comment>
<organism>
    <name type="scientific">Yersinia pestis bv. Antiqua (strain Nepal516)</name>
    <dbReference type="NCBI Taxonomy" id="377628"/>
    <lineage>
        <taxon>Bacteria</taxon>
        <taxon>Pseudomonadati</taxon>
        <taxon>Pseudomonadota</taxon>
        <taxon>Gammaproteobacteria</taxon>
        <taxon>Enterobacterales</taxon>
        <taxon>Yersiniaceae</taxon>
        <taxon>Yersinia</taxon>
    </lineage>
</organism>
<reference key="1">
    <citation type="journal article" date="2006" name="J. Bacteriol.">
        <title>Complete genome sequence of Yersinia pestis strains Antiqua and Nepal516: evidence of gene reduction in an emerging pathogen.</title>
        <authorList>
            <person name="Chain P.S.G."/>
            <person name="Hu P."/>
            <person name="Malfatti S.A."/>
            <person name="Radnedge L."/>
            <person name="Larimer F."/>
            <person name="Vergez L.M."/>
            <person name="Worsham P."/>
            <person name="Chu M.C."/>
            <person name="Andersen G.L."/>
        </authorList>
    </citation>
    <scope>NUCLEOTIDE SEQUENCE [LARGE SCALE GENOMIC DNA]</scope>
    <source>
        <strain>Nepal516</strain>
    </source>
</reference>
<reference key="2">
    <citation type="submission" date="2009-04" db="EMBL/GenBank/DDBJ databases">
        <title>Yersinia pestis Nepal516A whole genome shotgun sequencing project.</title>
        <authorList>
            <person name="Plunkett G. III"/>
            <person name="Anderson B.D."/>
            <person name="Baumler D.J."/>
            <person name="Burland V."/>
            <person name="Cabot E.L."/>
            <person name="Glasner J.D."/>
            <person name="Mau B."/>
            <person name="Neeno-Eckwall E."/>
            <person name="Perna N.T."/>
            <person name="Munk A.C."/>
            <person name="Tapia R."/>
            <person name="Green L.D."/>
            <person name="Rogers Y.C."/>
            <person name="Detter J.C."/>
            <person name="Bruce D.C."/>
            <person name="Brettin T.S."/>
        </authorList>
    </citation>
    <scope>NUCLEOTIDE SEQUENCE [LARGE SCALE GENOMIC DNA]</scope>
    <source>
        <strain>Nepal516</strain>
    </source>
</reference>